<accession>A0QFB7</accession>
<proteinExistence type="inferred from homology"/>
<sequence length="452" mass="51299">MQRRIMGIETEFGVTCTFHGHRRLSPDEVARYLFRRVVSWGRSSNVFLRNGARLYLDVGSHPEYATAECDNLVQLVTHDRAGEWVLEDLLVDAEQRLADEGIGGDIYLFKNNTDSAGNSYGCHENYLIVRAGEFSRISDVLLPFLVTRQLICGAGKVLQTPKAATFCLSQRAEHIWEGVSSATTRSRPIINTRDEPHADAEKYRRLHVIVGDSNMCETTTMLKVGTAALVLEMIEAGVPFRDFSLDNPIRAIREVSHDITGRRPVRLAGGRQASALDIQREYYSRAVEHLQTREPNAQIEQIVDLWGRQLDAVESQDFAKVDTEIDWVIKRKLFQRYQDRYNMELSDPKIAQLDLAYHDIKRGRGVFDLLQRKGLAARVTTDEDIAEAVDTPPQTTRARLRGEFISAAQAAGRDFTVDWVHLKLNDQAQRTVLCKDPFRAVDERVKRLIASM</sequence>
<comment type="function">
    <text evidence="1">Catalyzes the covalent attachment of the prokaryotic ubiquitin-like protein modifier Pup to the proteasomal substrate proteins, thereby targeting them for proteasomal degradation. This tagging system is termed pupylation. The ligation reaction involves the side-chain carboxylate of the C-terminal glutamate of Pup and the side-chain amino group of a substrate lysine.</text>
</comment>
<comment type="catalytic activity">
    <reaction evidence="1">
        <text>ATP + [prokaryotic ubiquitin-like protein]-L-glutamate + [protein]-L-lysine = ADP + phosphate + N(6)-([prokaryotic ubiquitin-like protein]-gamma-L-glutamyl)-[protein]-L-lysine.</text>
        <dbReference type="EC" id="6.3.1.19"/>
    </reaction>
</comment>
<comment type="pathway">
    <text evidence="1">Protein degradation; proteasomal Pup-dependent pathway.</text>
</comment>
<comment type="pathway">
    <text evidence="1">Protein modification; protein pupylation.</text>
</comment>
<comment type="miscellaneous">
    <text evidence="1">The reaction mechanism probably proceeds via the activation of Pup by phosphorylation of its C-terminal glutamate, which is then subject to nucleophilic attack by the substrate lysine, resulting in an isopeptide bond and the release of phosphate as a good leaving group.</text>
</comment>
<comment type="similarity">
    <text evidence="1">Belongs to the Pup ligase/Pup deamidase family. Pup-conjugating enzyme subfamily.</text>
</comment>
<gene>
    <name evidence="1" type="primary">pafA</name>
    <name type="ordered locus">MAV_2406</name>
</gene>
<feature type="chain" id="PRO_0000395924" description="Pup--protein ligase">
    <location>
        <begin position="1"/>
        <end position="452"/>
    </location>
</feature>
<feature type="active site" description="Proton acceptor" evidence="1">
    <location>
        <position position="57"/>
    </location>
</feature>
<feature type="binding site" evidence="1">
    <location>
        <position position="9"/>
    </location>
    <ligand>
        <name>Mg(2+)</name>
        <dbReference type="ChEBI" id="CHEBI:18420"/>
    </ligand>
</feature>
<feature type="binding site" evidence="1">
    <location>
        <position position="53"/>
    </location>
    <ligand>
        <name>ATP</name>
        <dbReference type="ChEBI" id="CHEBI:30616"/>
    </ligand>
</feature>
<feature type="binding site" evidence="1">
    <location>
        <position position="55"/>
    </location>
    <ligand>
        <name>Mg(2+)</name>
        <dbReference type="ChEBI" id="CHEBI:18420"/>
    </ligand>
</feature>
<feature type="binding site" evidence="1">
    <location>
        <position position="63"/>
    </location>
    <ligand>
        <name>Mg(2+)</name>
        <dbReference type="ChEBI" id="CHEBI:18420"/>
    </ligand>
</feature>
<feature type="binding site" evidence="1">
    <location>
        <position position="66"/>
    </location>
    <ligand>
        <name>ATP</name>
        <dbReference type="ChEBI" id="CHEBI:30616"/>
    </ligand>
</feature>
<feature type="binding site" evidence="1">
    <location>
        <position position="419"/>
    </location>
    <ligand>
        <name>ATP</name>
        <dbReference type="ChEBI" id="CHEBI:30616"/>
    </ligand>
</feature>
<name>PAFA_MYCA1</name>
<evidence type="ECO:0000255" key="1">
    <source>
        <dbReference type="HAMAP-Rule" id="MF_02111"/>
    </source>
</evidence>
<keyword id="KW-0067">ATP-binding</keyword>
<keyword id="KW-0436">Ligase</keyword>
<keyword id="KW-0460">Magnesium</keyword>
<keyword id="KW-0479">Metal-binding</keyword>
<keyword id="KW-0547">Nucleotide-binding</keyword>
<keyword id="KW-0833">Ubl conjugation pathway</keyword>
<protein>
    <recommendedName>
        <fullName evidence="1">Pup--protein ligase</fullName>
        <ecNumber evidence="1">6.3.1.19</ecNumber>
    </recommendedName>
    <alternativeName>
        <fullName evidence="1">Proteasome accessory factor A</fullName>
    </alternativeName>
    <alternativeName>
        <fullName evidence="1">Pup-conjugating enzyme</fullName>
    </alternativeName>
</protein>
<organism>
    <name type="scientific">Mycobacterium avium (strain 104)</name>
    <dbReference type="NCBI Taxonomy" id="243243"/>
    <lineage>
        <taxon>Bacteria</taxon>
        <taxon>Bacillati</taxon>
        <taxon>Actinomycetota</taxon>
        <taxon>Actinomycetes</taxon>
        <taxon>Mycobacteriales</taxon>
        <taxon>Mycobacteriaceae</taxon>
        <taxon>Mycobacterium</taxon>
        <taxon>Mycobacterium avium complex (MAC)</taxon>
    </lineage>
</organism>
<dbReference type="EC" id="6.3.1.19" evidence="1"/>
<dbReference type="EMBL" id="CP000479">
    <property type="protein sequence ID" value="ABK67182.1"/>
    <property type="molecule type" value="Genomic_DNA"/>
</dbReference>
<dbReference type="SMR" id="A0QFB7"/>
<dbReference type="KEGG" id="mav:MAV_2406"/>
<dbReference type="HOGENOM" id="CLU_040524_0_1_11"/>
<dbReference type="UniPathway" id="UPA00997"/>
<dbReference type="UniPathway" id="UPA00998"/>
<dbReference type="Proteomes" id="UP000001574">
    <property type="component" value="Chromosome"/>
</dbReference>
<dbReference type="GO" id="GO:0005524">
    <property type="term" value="F:ATP binding"/>
    <property type="evidence" value="ECO:0007669"/>
    <property type="project" value="UniProtKB-UniRule"/>
</dbReference>
<dbReference type="GO" id="GO:0016879">
    <property type="term" value="F:ligase activity, forming carbon-nitrogen bonds"/>
    <property type="evidence" value="ECO:0007669"/>
    <property type="project" value="InterPro"/>
</dbReference>
<dbReference type="GO" id="GO:0000287">
    <property type="term" value="F:magnesium ion binding"/>
    <property type="evidence" value="ECO:0007669"/>
    <property type="project" value="UniProtKB-UniRule"/>
</dbReference>
<dbReference type="GO" id="GO:0019787">
    <property type="term" value="F:ubiquitin-like protein transferase activity"/>
    <property type="evidence" value="ECO:0007669"/>
    <property type="project" value="UniProtKB-UniRule"/>
</dbReference>
<dbReference type="GO" id="GO:0019941">
    <property type="term" value="P:modification-dependent protein catabolic process"/>
    <property type="evidence" value="ECO:0007669"/>
    <property type="project" value="UniProtKB-UniRule"/>
</dbReference>
<dbReference type="GO" id="GO:0010498">
    <property type="term" value="P:proteasomal protein catabolic process"/>
    <property type="evidence" value="ECO:0007669"/>
    <property type="project" value="UniProtKB-UniRule"/>
</dbReference>
<dbReference type="GO" id="GO:0070490">
    <property type="term" value="P:protein pupylation"/>
    <property type="evidence" value="ECO:0007669"/>
    <property type="project" value="UniProtKB-UniRule"/>
</dbReference>
<dbReference type="HAMAP" id="MF_02111">
    <property type="entry name" value="Pup_ligase"/>
    <property type="match status" value="1"/>
</dbReference>
<dbReference type="InterPro" id="IPR022279">
    <property type="entry name" value="Pup_ligase"/>
</dbReference>
<dbReference type="InterPro" id="IPR004347">
    <property type="entry name" value="Pup_ligase/deamidase"/>
</dbReference>
<dbReference type="NCBIfam" id="TIGR03686">
    <property type="entry name" value="pupylate_PafA"/>
    <property type="match status" value="1"/>
</dbReference>
<dbReference type="PANTHER" id="PTHR42307">
    <property type="entry name" value="PUP DEAMIDASE/DEPUPYLASE"/>
    <property type="match status" value="1"/>
</dbReference>
<dbReference type="PANTHER" id="PTHR42307:SF3">
    <property type="entry name" value="PUP--PROTEIN LIGASE"/>
    <property type="match status" value="1"/>
</dbReference>
<dbReference type="Pfam" id="PF03136">
    <property type="entry name" value="Pup_ligase"/>
    <property type="match status" value="1"/>
</dbReference>
<dbReference type="PIRSF" id="PIRSF018077">
    <property type="entry name" value="UCP018077"/>
    <property type="match status" value="1"/>
</dbReference>
<reference key="1">
    <citation type="submission" date="2006-10" db="EMBL/GenBank/DDBJ databases">
        <authorList>
            <person name="Fleischmann R.D."/>
            <person name="Dodson R.J."/>
            <person name="Haft D.H."/>
            <person name="Merkel J.S."/>
            <person name="Nelson W.C."/>
            <person name="Fraser C.M."/>
        </authorList>
    </citation>
    <scope>NUCLEOTIDE SEQUENCE [LARGE SCALE GENOMIC DNA]</scope>
    <source>
        <strain>104</strain>
    </source>
</reference>